<reference key="1">
    <citation type="journal article" date="2003" name="Nat. Biotechnol.">
        <title>The genome sequence of the entomopathogenic bacterium Photorhabdus luminescens.</title>
        <authorList>
            <person name="Duchaud E."/>
            <person name="Rusniok C."/>
            <person name="Frangeul L."/>
            <person name="Buchrieser C."/>
            <person name="Givaudan A."/>
            <person name="Taourit S."/>
            <person name="Bocs S."/>
            <person name="Boursaux-Eude C."/>
            <person name="Chandler M."/>
            <person name="Charles J.-F."/>
            <person name="Dassa E."/>
            <person name="Derose R."/>
            <person name="Derzelle S."/>
            <person name="Freyssinet G."/>
            <person name="Gaudriault S."/>
            <person name="Medigue C."/>
            <person name="Lanois A."/>
            <person name="Powell K."/>
            <person name="Siguier P."/>
            <person name="Vincent R."/>
            <person name="Wingate V."/>
            <person name="Zouine M."/>
            <person name="Glaser P."/>
            <person name="Boemare N."/>
            <person name="Danchin A."/>
            <person name="Kunst F."/>
        </authorList>
    </citation>
    <scope>NUCLEOTIDE SEQUENCE [LARGE SCALE GENOMIC DNA]</scope>
    <source>
        <strain>DSM 15139 / CIP 105565 / TT01</strain>
    </source>
</reference>
<protein>
    <recommendedName>
        <fullName evidence="1">Elongation factor Ts</fullName>
        <shortName evidence="1">EF-Ts</shortName>
    </recommendedName>
</protein>
<gene>
    <name evidence="1" type="primary">tsf</name>
    <name type="ordered locus">plu0673</name>
</gene>
<comment type="function">
    <text evidence="1">Associates with the EF-Tu.GDP complex and induces the exchange of GDP to GTP. It remains bound to the aminoacyl-tRNA.EF-Tu.GTP complex up to the GTP hydrolysis stage on the ribosome.</text>
</comment>
<comment type="subcellular location">
    <subcellularLocation>
        <location evidence="1">Cytoplasm</location>
    </subcellularLocation>
</comment>
<comment type="similarity">
    <text evidence="1">Belongs to the EF-Ts family.</text>
</comment>
<name>EFTS_PHOLL</name>
<feature type="chain" id="PRO_0000161169" description="Elongation factor Ts">
    <location>
        <begin position="1"/>
        <end position="283"/>
    </location>
</feature>
<feature type="region of interest" description="Involved in Mg(2+) ion dislocation from EF-Tu" evidence="1">
    <location>
        <begin position="82"/>
        <end position="85"/>
    </location>
</feature>
<proteinExistence type="inferred from homology"/>
<dbReference type="EMBL" id="BX571861">
    <property type="protein sequence ID" value="CAE12968.1"/>
    <property type="molecule type" value="Genomic_DNA"/>
</dbReference>
<dbReference type="RefSeq" id="WP_011145049.1">
    <property type="nucleotide sequence ID" value="NC_005126.1"/>
</dbReference>
<dbReference type="SMR" id="Q7N8P6"/>
<dbReference type="STRING" id="243265.plu0673"/>
<dbReference type="GeneID" id="48846962"/>
<dbReference type="KEGG" id="plu:plu0673"/>
<dbReference type="eggNOG" id="COG0264">
    <property type="taxonomic scope" value="Bacteria"/>
</dbReference>
<dbReference type="HOGENOM" id="CLU_047155_0_2_6"/>
<dbReference type="OrthoDB" id="9808348at2"/>
<dbReference type="Proteomes" id="UP000002514">
    <property type="component" value="Chromosome"/>
</dbReference>
<dbReference type="GO" id="GO:0005737">
    <property type="term" value="C:cytoplasm"/>
    <property type="evidence" value="ECO:0007669"/>
    <property type="project" value="UniProtKB-SubCell"/>
</dbReference>
<dbReference type="GO" id="GO:0003746">
    <property type="term" value="F:translation elongation factor activity"/>
    <property type="evidence" value="ECO:0007669"/>
    <property type="project" value="UniProtKB-UniRule"/>
</dbReference>
<dbReference type="CDD" id="cd14275">
    <property type="entry name" value="UBA_EF-Ts"/>
    <property type="match status" value="1"/>
</dbReference>
<dbReference type="FunFam" id="1.10.286.20:FF:000001">
    <property type="entry name" value="Elongation factor Ts"/>
    <property type="match status" value="1"/>
</dbReference>
<dbReference type="FunFam" id="1.10.8.10:FF:000001">
    <property type="entry name" value="Elongation factor Ts"/>
    <property type="match status" value="1"/>
</dbReference>
<dbReference type="FunFam" id="3.30.479.20:FF:000001">
    <property type="entry name" value="Elongation factor Ts"/>
    <property type="match status" value="1"/>
</dbReference>
<dbReference type="Gene3D" id="1.10.286.20">
    <property type="match status" value="1"/>
</dbReference>
<dbReference type="Gene3D" id="1.10.8.10">
    <property type="entry name" value="DNA helicase RuvA subunit, C-terminal domain"/>
    <property type="match status" value="1"/>
</dbReference>
<dbReference type="Gene3D" id="3.30.479.20">
    <property type="entry name" value="Elongation factor Ts, dimerisation domain"/>
    <property type="match status" value="2"/>
</dbReference>
<dbReference type="HAMAP" id="MF_00050">
    <property type="entry name" value="EF_Ts"/>
    <property type="match status" value="1"/>
</dbReference>
<dbReference type="InterPro" id="IPR036402">
    <property type="entry name" value="EF-Ts_dimer_sf"/>
</dbReference>
<dbReference type="InterPro" id="IPR001816">
    <property type="entry name" value="Transl_elong_EFTs/EF1B"/>
</dbReference>
<dbReference type="InterPro" id="IPR014039">
    <property type="entry name" value="Transl_elong_EFTs/EF1B_dimer"/>
</dbReference>
<dbReference type="InterPro" id="IPR018101">
    <property type="entry name" value="Transl_elong_Ts_CS"/>
</dbReference>
<dbReference type="InterPro" id="IPR009060">
    <property type="entry name" value="UBA-like_sf"/>
</dbReference>
<dbReference type="NCBIfam" id="TIGR00116">
    <property type="entry name" value="tsf"/>
    <property type="match status" value="1"/>
</dbReference>
<dbReference type="PANTHER" id="PTHR11741">
    <property type="entry name" value="ELONGATION FACTOR TS"/>
    <property type="match status" value="1"/>
</dbReference>
<dbReference type="PANTHER" id="PTHR11741:SF0">
    <property type="entry name" value="ELONGATION FACTOR TS, MITOCHONDRIAL"/>
    <property type="match status" value="1"/>
</dbReference>
<dbReference type="Pfam" id="PF00889">
    <property type="entry name" value="EF_TS"/>
    <property type="match status" value="1"/>
</dbReference>
<dbReference type="SUPFAM" id="SSF54713">
    <property type="entry name" value="Elongation factor Ts (EF-Ts), dimerisation domain"/>
    <property type="match status" value="2"/>
</dbReference>
<dbReference type="SUPFAM" id="SSF46934">
    <property type="entry name" value="UBA-like"/>
    <property type="match status" value="1"/>
</dbReference>
<dbReference type="PROSITE" id="PS01126">
    <property type="entry name" value="EF_TS_1"/>
    <property type="match status" value="1"/>
</dbReference>
<dbReference type="PROSITE" id="PS01127">
    <property type="entry name" value="EF_TS_2"/>
    <property type="match status" value="1"/>
</dbReference>
<sequence length="283" mass="30367">MSGITAALVKELRERTGAGMMECKKALVEANGDIELAIDNMRKSGQAKAAKKAGRVAAEGIILAEVAADGKFGALVELNCETDFVAKDAGFIAFGKEVMATVLADKISDIETLKAKFEEQRTALVAKIGENINIRRVSVLEGEQLGTYLHGARIGVLVAAEGANEELIKHVAMHIAASKPEYVNPSDVPADVVDREHQIQLDIAMQSGKPREIAEKMVSGRMNKFTGEISLTGQNFVMDPSKTVGDLLKENNATVTSFIRYEVGEGIEKVETDFAAEVAAMSK</sequence>
<organism>
    <name type="scientific">Photorhabdus laumondii subsp. laumondii (strain DSM 15139 / CIP 105565 / TT01)</name>
    <name type="common">Photorhabdus luminescens subsp. laumondii</name>
    <dbReference type="NCBI Taxonomy" id="243265"/>
    <lineage>
        <taxon>Bacteria</taxon>
        <taxon>Pseudomonadati</taxon>
        <taxon>Pseudomonadota</taxon>
        <taxon>Gammaproteobacteria</taxon>
        <taxon>Enterobacterales</taxon>
        <taxon>Morganellaceae</taxon>
        <taxon>Photorhabdus</taxon>
    </lineage>
</organism>
<accession>Q7N8P6</accession>
<evidence type="ECO:0000255" key="1">
    <source>
        <dbReference type="HAMAP-Rule" id="MF_00050"/>
    </source>
</evidence>
<keyword id="KW-0963">Cytoplasm</keyword>
<keyword id="KW-0251">Elongation factor</keyword>
<keyword id="KW-0648">Protein biosynthesis</keyword>
<keyword id="KW-1185">Reference proteome</keyword>